<organism>
    <name type="scientific">Desulfatibacillum aliphaticivorans</name>
    <dbReference type="NCBI Taxonomy" id="218208"/>
    <lineage>
        <taxon>Bacteria</taxon>
        <taxon>Pseudomonadati</taxon>
        <taxon>Thermodesulfobacteriota</taxon>
        <taxon>Desulfobacteria</taxon>
        <taxon>Desulfobacterales</taxon>
        <taxon>Desulfatibacillaceae</taxon>
        <taxon>Desulfatibacillum</taxon>
    </lineage>
</organism>
<reference key="1">
    <citation type="journal article" date="2012" name="Environ. Microbiol.">
        <title>The genome sequence of Desulfatibacillum alkenivorans AK-01: a blueprint for anaerobic alkane oxidation.</title>
        <authorList>
            <person name="Callaghan A.V."/>
            <person name="Morris B.E."/>
            <person name="Pereira I.A."/>
            <person name="McInerney M.J."/>
            <person name="Austin R.N."/>
            <person name="Groves J.T."/>
            <person name="Kukor J.J."/>
            <person name="Suflita J.M."/>
            <person name="Young L.Y."/>
            <person name="Zylstra G.J."/>
            <person name="Wawrik B."/>
        </authorList>
    </citation>
    <scope>NUCLEOTIDE SEQUENCE [LARGE SCALE GENOMIC DNA]</scope>
    <source>
        <strain>AK-01</strain>
    </source>
</reference>
<dbReference type="EMBL" id="CP001322">
    <property type="protein sequence ID" value="ACL03599.1"/>
    <property type="molecule type" value="Genomic_DNA"/>
</dbReference>
<dbReference type="RefSeq" id="WP_012611030.1">
    <property type="nucleotide sequence ID" value="NC_011768.1"/>
</dbReference>
<dbReference type="SMR" id="B8FES2"/>
<dbReference type="KEGG" id="dal:Dalk_1902"/>
<dbReference type="eggNOG" id="COG0199">
    <property type="taxonomic scope" value="Bacteria"/>
</dbReference>
<dbReference type="HOGENOM" id="CLU_139869_3_0_7"/>
<dbReference type="Proteomes" id="UP000000739">
    <property type="component" value="Chromosome"/>
</dbReference>
<dbReference type="GO" id="GO:0005737">
    <property type="term" value="C:cytoplasm"/>
    <property type="evidence" value="ECO:0007669"/>
    <property type="project" value="UniProtKB-ARBA"/>
</dbReference>
<dbReference type="GO" id="GO:0015935">
    <property type="term" value="C:small ribosomal subunit"/>
    <property type="evidence" value="ECO:0007669"/>
    <property type="project" value="TreeGrafter"/>
</dbReference>
<dbReference type="GO" id="GO:0019843">
    <property type="term" value="F:rRNA binding"/>
    <property type="evidence" value="ECO:0007669"/>
    <property type="project" value="UniProtKB-UniRule"/>
</dbReference>
<dbReference type="GO" id="GO:0003735">
    <property type="term" value="F:structural constituent of ribosome"/>
    <property type="evidence" value="ECO:0007669"/>
    <property type="project" value="InterPro"/>
</dbReference>
<dbReference type="GO" id="GO:0008270">
    <property type="term" value="F:zinc ion binding"/>
    <property type="evidence" value="ECO:0007669"/>
    <property type="project" value="UniProtKB-UniRule"/>
</dbReference>
<dbReference type="GO" id="GO:0006412">
    <property type="term" value="P:translation"/>
    <property type="evidence" value="ECO:0007669"/>
    <property type="project" value="UniProtKB-UniRule"/>
</dbReference>
<dbReference type="FunFam" id="4.10.830.10:FF:000001">
    <property type="entry name" value="30S ribosomal protein S14 type Z"/>
    <property type="match status" value="1"/>
</dbReference>
<dbReference type="Gene3D" id="4.10.830.10">
    <property type="entry name" value="30s Ribosomal Protein S14, Chain N"/>
    <property type="match status" value="1"/>
</dbReference>
<dbReference type="HAMAP" id="MF_01364_B">
    <property type="entry name" value="Ribosomal_uS14_2_B"/>
    <property type="match status" value="1"/>
</dbReference>
<dbReference type="InterPro" id="IPR001209">
    <property type="entry name" value="Ribosomal_uS14"/>
</dbReference>
<dbReference type="InterPro" id="IPR023053">
    <property type="entry name" value="Ribosomal_uS14_bact"/>
</dbReference>
<dbReference type="InterPro" id="IPR018271">
    <property type="entry name" value="Ribosomal_uS14_CS"/>
</dbReference>
<dbReference type="InterPro" id="IPR043140">
    <property type="entry name" value="Ribosomal_uS14_sf"/>
</dbReference>
<dbReference type="NCBIfam" id="NF005974">
    <property type="entry name" value="PRK08061.1"/>
    <property type="match status" value="1"/>
</dbReference>
<dbReference type="PANTHER" id="PTHR19836">
    <property type="entry name" value="30S RIBOSOMAL PROTEIN S14"/>
    <property type="match status" value="1"/>
</dbReference>
<dbReference type="PANTHER" id="PTHR19836:SF19">
    <property type="entry name" value="SMALL RIBOSOMAL SUBUNIT PROTEIN US14M"/>
    <property type="match status" value="1"/>
</dbReference>
<dbReference type="Pfam" id="PF00253">
    <property type="entry name" value="Ribosomal_S14"/>
    <property type="match status" value="1"/>
</dbReference>
<dbReference type="SUPFAM" id="SSF57716">
    <property type="entry name" value="Glucocorticoid receptor-like (DNA-binding domain)"/>
    <property type="match status" value="1"/>
</dbReference>
<dbReference type="PROSITE" id="PS00527">
    <property type="entry name" value="RIBOSOMAL_S14"/>
    <property type="match status" value="1"/>
</dbReference>
<feature type="chain" id="PRO_1000143895" description="Small ribosomal subunit protein uS14">
    <location>
        <begin position="1"/>
        <end position="61"/>
    </location>
</feature>
<feature type="binding site" evidence="1">
    <location>
        <position position="24"/>
    </location>
    <ligand>
        <name>Zn(2+)</name>
        <dbReference type="ChEBI" id="CHEBI:29105"/>
    </ligand>
</feature>
<feature type="binding site" evidence="1">
    <location>
        <position position="27"/>
    </location>
    <ligand>
        <name>Zn(2+)</name>
        <dbReference type="ChEBI" id="CHEBI:29105"/>
    </ligand>
</feature>
<feature type="binding site" evidence="1">
    <location>
        <position position="40"/>
    </location>
    <ligand>
        <name>Zn(2+)</name>
        <dbReference type="ChEBI" id="CHEBI:29105"/>
    </ligand>
</feature>
<feature type="binding site" evidence="1">
    <location>
        <position position="43"/>
    </location>
    <ligand>
        <name>Zn(2+)</name>
        <dbReference type="ChEBI" id="CHEBI:29105"/>
    </ligand>
</feature>
<comment type="function">
    <text evidence="1">Binds 16S rRNA, required for the assembly of 30S particles and may also be responsible for determining the conformation of the 16S rRNA at the A site.</text>
</comment>
<comment type="cofactor">
    <cofactor evidence="1">
        <name>Zn(2+)</name>
        <dbReference type="ChEBI" id="CHEBI:29105"/>
    </cofactor>
    <text evidence="1">Binds 1 zinc ion per subunit.</text>
</comment>
<comment type="subunit">
    <text evidence="1">Part of the 30S ribosomal subunit. Contacts proteins S3 and S10.</text>
</comment>
<comment type="similarity">
    <text evidence="1">Belongs to the universal ribosomal protein uS14 family. Zinc-binding uS14 subfamily.</text>
</comment>
<accession>B8FES2</accession>
<name>RS14Z_DESAL</name>
<sequence length="61" mass="7069">MARKSLCVKAQRTPKFKVRTYNRCPLCGRPRGYMRKFGICRICFRNMASEGLLPGVIKSSW</sequence>
<protein>
    <recommendedName>
        <fullName evidence="1">Small ribosomal subunit protein uS14</fullName>
    </recommendedName>
    <alternativeName>
        <fullName evidence="2">30S ribosomal protein S14 type Z</fullName>
    </alternativeName>
</protein>
<proteinExistence type="inferred from homology"/>
<gene>
    <name evidence="1" type="primary">rpsZ</name>
    <name evidence="1" type="synonym">rpsN</name>
    <name type="ordered locus">Dalk_1902</name>
</gene>
<evidence type="ECO:0000255" key="1">
    <source>
        <dbReference type="HAMAP-Rule" id="MF_01364"/>
    </source>
</evidence>
<evidence type="ECO:0000305" key="2"/>
<keyword id="KW-0479">Metal-binding</keyword>
<keyword id="KW-1185">Reference proteome</keyword>
<keyword id="KW-0687">Ribonucleoprotein</keyword>
<keyword id="KW-0689">Ribosomal protein</keyword>
<keyword id="KW-0694">RNA-binding</keyword>
<keyword id="KW-0699">rRNA-binding</keyword>
<keyword id="KW-0862">Zinc</keyword>